<proteinExistence type="inferred from homology"/>
<sequence>MPKRLDINTILVIGSGPIVIGQAAEFDYSGTQACQSLKEEGYKVILVNSNPATIMTDTATADKVYIEPLTLEFVSRIIRKERPDAILPTLGGQTGLNMAVELAKSGVLEECGVEILGTKLSAIEQAEDRDLFRTLMQDLNEPTPPSEIIHNLDEAYGFVNEIGYPVIVRPAFTLGGTGGGICHNEEELIEIVTSGLKHSPVTQCLLEKSIAGCKEIEYEVMRDSNDNAIVVCNMENIDPVGVHTGDSIVVAPSQTLSDREYQMLRNTSLRIIRALGIEGGCNVQLALDPYSFQYYVIEVNPRVSRSSALASKATGYPIAKLAAKIAVGLTLDEIVNPVTQKTYACFEPALDYVVSKIPRWPFDKFESANRTLGTQMKATGEVMSIGRNLEESLLKAVRSLELGIYHLELDHLKELDKETMKKRIIKADDERLFIVAEAIRQGVTKEEINEWCEMDFFFLQKVENIVNMEREVKANVGNMEVLQTAKEMGFSDHYIAAAWNKTEREIYDMRKENNMTPVFKMVDTCAAEFESATPYYYSTYADENESIVTDRKSVVVLGSGPIRIGQGVEFDYATVHSVWAIKEAGYEAIIINNNPETVSTDFSISDKLYFEPLTIEDVMHIIDLEKPEGVIVQFGGQTAINLAAKLEEHGVKILGTSLEDLDRAEDRDKFEAALTKLGIPQPVGKTATTVEQAVAIAEEIGYPVLVRPSYVLGGRAMEIVYRQEELLHYMKNAVKVHADHPVLIDRYMVGKEIEVDAISDGENVFIPGIMEHIERAGVHSGDSIGVYPPQSLSEKLKEQIIEHTIALGKGLNIVGLLNIQFVVFKDQVYVIEVNPRASRTVPFLSKITGVPMANVATKVILGQNLVEQGYGTGYHPEEKEVYVKAPVFSFAKLRSVDTTLGPEMKSTGEVMGKDLTLEKALYKGLVASGINIPTHGSVIITVADKDKEEAMEIAKRFHEIGYNLLATAGTAQSLAEQNIPVQVVNKIDSEEYNLLDIIRQGKAQFVINTLTKGKQPARDGFRIRRESVENGVACLTSLDTTRAILRVLESMTFSAHSMKEITQTKRHEVVHA</sequence>
<reference key="1">
    <citation type="journal article" date="2009" name="J. Bacteriol.">
        <title>Complete genome sequence of the extremophilic Bacillus cereus strain Q1 with industrial applications.</title>
        <authorList>
            <person name="Xiong Z."/>
            <person name="Jiang Y."/>
            <person name="Qi D."/>
            <person name="Lu H."/>
            <person name="Yang F."/>
            <person name="Yang J."/>
            <person name="Chen L."/>
            <person name="Sun L."/>
            <person name="Xu X."/>
            <person name="Xue Y."/>
            <person name="Zhu Y."/>
            <person name="Jin Q."/>
        </authorList>
    </citation>
    <scope>NUCLEOTIDE SEQUENCE [LARGE SCALE GENOMIC DNA]</scope>
    <source>
        <strain>Q1</strain>
    </source>
</reference>
<keyword id="KW-0028">Amino-acid biosynthesis</keyword>
<keyword id="KW-0055">Arginine biosynthesis</keyword>
<keyword id="KW-0067">ATP-binding</keyword>
<keyword id="KW-0436">Ligase</keyword>
<keyword id="KW-0460">Magnesium</keyword>
<keyword id="KW-0464">Manganese</keyword>
<keyword id="KW-0479">Metal-binding</keyword>
<keyword id="KW-0547">Nucleotide-binding</keyword>
<keyword id="KW-0665">Pyrimidine biosynthesis</keyword>
<keyword id="KW-0677">Repeat</keyword>
<feature type="chain" id="PRO_1000164706" description="Carbamoyl phosphate synthase large chain">
    <location>
        <begin position="1"/>
        <end position="1072"/>
    </location>
</feature>
<feature type="domain" description="ATP-grasp 1" evidence="1">
    <location>
        <begin position="133"/>
        <end position="327"/>
    </location>
</feature>
<feature type="domain" description="ATP-grasp 2" evidence="1">
    <location>
        <begin position="671"/>
        <end position="861"/>
    </location>
</feature>
<feature type="domain" description="MGS-like" evidence="1">
    <location>
        <begin position="930"/>
        <end position="1072"/>
    </location>
</feature>
<feature type="region of interest" description="Carboxyphosphate synthetic domain" evidence="1">
    <location>
        <begin position="1"/>
        <end position="401"/>
    </location>
</feature>
<feature type="region of interest" description="Oligomerization domain" evidence="1">
    <location>
        <begin position="402"/>
        <end position="546"/>
    </location>
</feature>
<feature type="region of interest" description="Carbamoyl phosphate synthetic domain" evidence="1">
    <location>
        <begin position="547"/>
        <end position="929"/>
    </location>
</feature>
<feature type="region of interest" description="Allosteric domain" evidence="1">
    <location>
        <begin position="930"/>
        <end position="1072"/>
    </location>
</feature>
<feature type="binding site" evidence="1">
    <location>
        <position position="129"/>
    </location>
    <ligand>
        <name>ATP</name>
        <dbReference type="ChEBI" id="CHEBI:30616"/>
        <label>1</label>
    </ligand>
</feature>
<feature type="binding site" evidence="1">
    <location>
        <position position="169"/>
    </location>
    <ligand>
        <name>ATP</name>
        <dbReference type="ChEBI" id="CHEBI:30616"/>
        <label>1</label>
    </ligand>
</feature>
<feature type="binding site" evidence="1">
    <location>
        <position position="175"/>
    </location>
    <ligand>
        <name>ATP</name>
        <dbReference type="ChEBI" id="CHEBI:30616"/>
        <label>1</label>
    </ligand>
</feature>
<feature type="binding site" evidence="1">
    <location>
        <position position="176"/>
    </location>
    <ligand>
        <name>ATP</name>
        <dbReference type="ChEBI" id="CHEBI:30616"/>
        <label>1</label>
    </ligand>
</feature>
<feature type="binding site" evidence="1">
    <location>
        <position position="208"/>
    </location>
    <ligand>
        <name>ATP</name>
        <dbReference type="ChEBI" id="CHEBI:30616"/>
        <label>1</label>
    </ligand>
</feature>
<feature type="binding site" evidence="1">
    <location>
        <position position="210"/>
    </location>
    <ligand>
        <name>ATP</name>
        <dbReference type="ChEBI" id="CHEBI:30616"/>
        <label>1</label>
    </ligand>
</feature>
<feature type="binding site" evidence="1">
    <location>
        <position position="215"/>
    </location>
    <ligand>
        <name>ATP</name>
        <dbReference type="ChEBI" id="CHEBI:30616"/>
        <label>1</label>
    </ligand>
</feature>
<feature type="binding site" evidence="1">
    <location>
        <position position="241"/>
    </location>
    <ligand>
        <name>ATP</name>
        <dbReference type="ChEBI" id="CHEBI:30616"/>
        <label>1</label>
    </ligand>
</feature>
<feature type="binding site" evidence="1">
    <location>
        <position position="242"/>
    </location>
    <ligand>
        <name>ATP</name>
        <dbReference type="ChEBI" id="CHEBI:30616"/>
        <label>1</label>
    </ligand>
</feature>
<feature type="binding site" evidence="1">
    <location>
        <position position="243"/>
    </location>
    <ligand>
        <name>ATP</name>
        <dbReference type="ChEBI" id="CHEBI:30616"/>
        <label>1</label>
    </ligand>
</feature>
<feature type="binding site" evidence="1">
    <location>
        <position position="284"/>
    </location>
    <ligand>
        <name>ATP</name>
        <dbReference type="ChEBI" id="CHEBI:30616"/>
        <label>1</label>
    </ligand>
</feature>
<feature type="binding site" evidence="1">
    <location>
        <position position="284"/>
    </location>
    <ligand>
        <name>Mg(2+)</name>
        <dbReference type="ChEBI" id="CHEBI:18420"/>
        <label>1</label>
    </ligand>
</feature>
<feature type="binding site" evidence="1">
    <location>
        <position position="284"/>
    </location>
    <ligand>
        <name>Mn(2+)</name>
        <dbReference type="ChEBI" id="CHEBI:29035"/>
        <label>1</label>
    </ligand>
</feature>
<feature type="binding site" evidence="1">
    <location>
        <position position="298"/>
    </location>
    <ligand>
        <name>ATP</name>
        <dbReference type="ChEBI" id="CHEBI:30616"/>
        <label>1</label>
    </ligand>
</feature>
<feature type="binding site" evidence="1">
    <location>
        <position position="298"/>
    </location>
    <ligand>
        <name>Mg(2+)</name>
        <dbReference type="ChEBI" id="CHEBI:18420"/>
        <label>1</label>
    </ligand>
</feature>
<feature type="binding site" evidence="1">
    <location>
        <position position="298"/>
    </location>
    <ligand>
        <name>Mg(2+)</name>
        <dbReference type="ChEBI" id="CHEBI:18420"/>
        <label>2</label>
    </ligand>
</feature>
<feature type="binding site" evidence="1">
    <location>
        <position position="298"/>
    </location>
    <ligand>
        <name>Mn(2+)</name>
        <dbReference type="ChEBI" id="CHEBI:29035"/>
        <label>1</label>
    </ligand>
</feature>
<feature type="binding site" evidence="1">
    <location>
        <position position="298"/>
    </location>
    <ligand>
        <name>Mn(2+)</name>
        <dbReference type="ChEBI" id="CHEBI:29035"/>
        <label>2</label>
    </ligand>
</feature>
<feature type="binding site" evidence="1">
    <location>
        <position position="300"/>
    </location>
    <ligand>
        <name>Mg(2+)</name>
        <dbReference type="ChEBI" id="CHEBI:18420"/>
        <label>2</label>
    </ligand>
</feature>
<feature type="binding site" evidence="1">
    <location>
        <position position="300"/>
    </location>
    <ligand>
        <name>Mn(2+)</name>
        <dbReference type="ChEBI" id="CHEBI:29035"/>
        <label>2</label>
    </ligand>
</feature>
<feature type="binding site" evidence="1">
    <location>
        <position position="707"/>
    </location>
    <ligand>
        <name>ATP</name>
        <dbReference type="ChEBI" id="CHEBI:30616"/>
        <label>2</label>
    </ligand>
</feature>
<feature type="binding site" evidence="1">
    <location>
        <position position="746"/>
    </location>
    <ligand>
        <name>ATP</name>
        <dbReference type="ChEBI" id="CHEBI:30616"/>
        <label>2</label>
    </ligand>
</feature>
<feature type="binding site" evidence="1">
    <location>
        <position position="752"/>
    </location>
    <ligand>
        <name>ATP</name>
        <dbReference type="ChEBI" id="CHEBI:30616"/>
        <label>2</label>
    </ligand>
</feature>
<feature type="binding site" evidence="1">
    <location>
        <position position="777"/>
    </location>
    <ligand>
        <name>ATP</name>
        <dbReference type="ChEBI" id="CHEBI:30616"/>
        <label>2</label>
    </ligand>
</feature>
<feature type="binding site" evidence="1">
    <location>
        <position position="778"/>
    </location>
    <ligand>
        <name>ATP</name>
        <dbReference type="ChEBI" id="CHEBI:30616"/>
        <label>2</label>
    </ligand>
</feature>
<feature type="binding site" evidence="1">
    <location>
        <position position="779"/>
    </location>
    <ligand>
        <name>ATP</name>
        <dbReference type="ChEBI" id="CHEBI:30616"/>
        <label>2</label>
    </ligand>
</feature>
<feature type="binding site" evidence="1">
    <location>
        <position position="780"/>
    </location>
    <ligand>
        <name>ATP</name>
        <dbReference type="ChEBI" id="CHEBI:30616"/>
        <label>2</label>
    </ligand>
</feature>
<feature type="binding site" evidence="1">
    <location>
        <position position="820"/>
    </location>
    <ligand>
        <name>ATP</name>
        <dbReference type="ChEBI" id="CHEBI:30616"/>
        <label>2</label>
    </ligand>
</feature>
<feature type="binding site" evidence="1">
    <location>
        <position position="820"/>
    </location>
    <ligand>
        <name>Mg(2+)</name>
        <dbReference type="ChEBI" id="CHEBI:18420"/>
        <label>3</label>
    </ligand>
</feature>
<feature type="binding site" evidence="1">
    <location>
        <position position="820"/>
    </location>
    <ligand>
        <name>Mn(2+)</name>
        <dbReference type="ChEBI" id="CHEBI:29035"/>
        <label>3</label>
    </ligand>
</feature>
<feature type="binding site" evidence="1">
    <location>
        <position position="832"/>
    </location>
    <ligand>
        <name>ATP</name>
        <dbReference type="ChEBI" id="CHEBI:30616"/>
        <label>2</label>
    </ligand>
</feature>
<feature type="binding site" evidence="1">
    <location>
        <position position="832"/>
    </location>
    <ligand>
        <name>Mg(2+)</name>
        <dbReference type="ChEBI" id="CHEBI:18420"/>
        <label>3</label>
    </ligand>
</feature>
<feature type="binding site" evidence="1">
    <location>
        <position position="832"/>
    </location>
    <ligand>
        <name>Mg(2+)</name>
        <dbReference type="ChEBI" id="CHEBI:18420"/>
        <label>4</label>
    </ligand>
</feature>
<feature type="binding site" evidence="1">
    <location>
        <position position="832"/>
    </location>
    <ligand>
        <name>Mn(2+)</name>
        <dbReference type="ChEBI" id="CHEBI:29035"/>
        <label>3</label>
    </ligand>
</feature>
<feature type="binding site" evidence="1">
    <location>
        <position position="832"/>
    </location>
    <ligand>
        <name>Mn(2+)</name>
        <dbReference type="ChEBI" id="CHEBI:29035"/>
        <label>4</label>
    </ligand>
</feature>
<feature type="binding site" evidence="1">
    <location>
        <position position="834"/>
    </location>
    <ligand>
        <name>Mg(2+)</name>
        <dbReference type="ChEBI" id="CHEBI:18420"/>
        <label>4</label>
    </ligand>
</feature>
<feature type="binding site" evidence="1">
    <location>
        <position position="834"/>
    </location>
    <ligand>
        <name>Mn(2+)</name>
        <dbReference type="ChEBI" id="CHEBI:29035"/>
        <label>4</label>
    </ligand>
</feature>
<evidence type="ECO:0000255" key="1">
    <source>
        <dbReference type="HAMAP-Rule" id="MF_01210"/>
    </source>
</evidence>
<organism>
    <name type="scientific">Bacillus cereus (strain Q1)</name>
    <dbReference type="NCBI Taxonomy" id="361100"/>
    <lineage>
        <taxon>Bacteria</taxon>
        <taxon>Bacillati</taxon>
        <taxon>Bacillota</taxon>
        <taxon>Bacilli</taxon>
        <taxon>Bacillales</taxon>
        <taxon>Bacillaceae</taxon>
        <taxon>Bacillus</taxon>
        <taxon>Bacillus cereus group</taxon>
    </lineage>
</organism>
<accession>B9IVW3</accession>
<comment type="function">
    <text evidence="1">Large subunit of the glutamine-dependent carbamoyl phosphate synthetase (CPSase). CPSase catalyzes the formation of carbamoyl phosphate from the ammonia moiety of glutamine, carbonate, and phosphate donated by ATP, constituting the first step of 2 biosynthetic pathways, one leading to arginine and/or urea and the other to pyrimidine nucleotides. The large subunit (synthetase) binds the substrates ammonia (free or transferred from glutamine from the small subunit), hydrogencarbonate and ATP and carries out an ATP-coupled ligase reaction, activating hydrogencarbonate by forming carboxy phosphate which reacts with ammonia to form carbamoyl phosphate.</text>
</comment>
<comment type="catalytic activity">
    <reaction evidence="1">
        <text>hydrogencarbonate + L-glutamine + 2 ATP + H2O = carbamoyl phosphate + L-glutamate + 2 ADP + phosphate + 2 H(+)</text>
        <dbReference type="Rhea" id="RHEA:18633"/>
        <dbReference type="ChEBI" id="CHEBI:15377"/>
        <dbReference type="ChEBI" id="CHEBI:15378"/>
        <dbReference type="ChEBI" id="CHEBI:17544"/>
        <dbReference type="ChEBI" id="CHEBI:29985"/>
        <dbReference type="ChEBI" id="CHEBI:30616"/>
        <dbReference type="ChEBI" id="CHEBI:43474"/>
        <dbReference type="ChEBI" id="CHEBI:58228"/>
        <dbReference type="ChEBI" id="CHEBI:58359"/>
        <dbReference type="ChEBI" id="CHEBI:456216"/>
        <dbReference type="EC" id="6.3.5.5"/>
    </reaction>
</comment>
<comment type="catalytic activity">
    <molecule>Carbamoyl phosphate synthase large chain</molecule>
    <reaction evidence="1">
        <text>hydrogencarbonate + NH4(+) + 2 ATP = carbamoyl phosphate + 2 ADP + phosphate + 2 H(+)</text>
        <dbReference type="Rhea" id="RHEA:18029"/>
        <dbReference type="ChEBI" id="CHEBI:15378"/>
        <dbReference type="ChEBI" id="CHEBI:17544"/>
        <dbReference type="ChEBI" id="CHEBI:28938"/>
        <dbReference type="ChEBI" id="CHEBI:30616"/>
        <dbReference type="ChEBI" id="CHEBI:43474"/>
        <dbReference type="ChEBI" id="CHEBI:58228"/>
        <dbReference type="ChEBI" id="CHEBI:456216"/>
        <dbReference type="EC" id="6.3.4.16"/>
    </reaction>
</comment>
<comment type="cofactor">
    <cofactor evidence="1">
        <name>Mg(2+)</name>
        <dbReference type="ChEBI" id="CHEBI:18420"/>
    </cofactor>
    <cofactor evidence="1">
        <name>Mn(2+)</name>
        <dbReference type="ChEBI" id="CHEBI:29035"/>
    </cofactor>
    <text evidence="1">Binds 4 Mg(2+) or Mn(2+) ions per subunit.</text>
</comment>
<comment type="pathway">
    <text evidence="1">Amino-acid biosynthesis; L-arginine biosynthesis; carbamoyl phosphate from bicarbonate: step 1/1.</text>
</comment>
<comment type="pathway">
    <text evidence="1">Pyrimidine metabolism; UMP biosynthesis via de novo pathway; (S)-dihydroorotate from bicarbonate: step 1/3.</text>
</comment>
<comment type="subunit">
    <text evidence="1">Composed of two chains; the small (or glutamine) chain promotes the hydrolysis of glutamine to ammonia, which is used by the large (or ammonia) chain to synthesize carbamoyl phosphate. Tetramer of heterodimers (alpha,beta)4.</text>
</comment>
<comment type="domain">
    <text evidence="1">The large subunit is composed of 2 ATP-grasp domains that are involved in binding the 2 ATP molecules needed for carbamoyl phosphate synthesis. The N-terminal ATP-grasp domain (referred to as the carboxyphosphate synthetic component) catalyzes the ATP-dependent phosphorylation of hydrogencarbonate to carboxyphosphate and the subsequent nucleophilic attack by ammonia to form a carbamate intermediate. The C-terminal ATP-grasp domain (referred to as the carbamoyl phosphate synthetic component) then catalyzes the phosphorylation of carbamate with the second ATP to form the end product carbamoyl phosphate. The reactive and unstable enzyme intermediates are sequentially channeled from one active site to the next through the interior of the protein over a distance of at least 96 A.</text>
</comment>
<comment type="similarity">
    <text evidence="1">Belongs to the CarB family.</text>
</comment>
<name>CARB_BACCQ</name>
<dbReference type="EC" id="6.3.4.16" evidence="1"/>
<dbReference type="EC" id="6.3.5.5" evidence="1"/>
<dbReference type="EMBL" id="CP000227">
    <property type="protein sequence ID" value="ACM14100.1"/>
    <property type="molecule type" value="Genomic_DNA"/>
</dbReference>
<dbReference type="SMR" id="B9IVW3"/>
<dbReference type="KEGG" id="bcq:BCQ_3672"/>
<dbReference type="HOGENOM" id="CLU_000513_1_0_9"/>
<dbReference type="UniPathway" id="UPA00068">
    <property type="reaction ID" value="UER00171"/>
</dbReference>
<dbReference type="UniPathway" id="UPA00070">
    <property type="reaction ID" value="UER00115"/>
</dbReference>
<dbReference type="Proteomes" id="UP000000441">
    <property type="component" value="Chromosome"/>
</dbReference>
<dbReference type="GO" id="GO:0005737">
    <property type="term" value="C:cytoplasm"/>
    <property type="evidence" value="ECO:0007669"/>
    <property type="project" value="TreeGrafter"/>
</dbReference>
<dbReference type="GO" id="GO:0005524">
    <property type="term" value="F:ATP binding"/>
    <property type="evidence" value="ECO:0007669"/>
    <property type="project" value="UniProtKB-UniRule"/>
</dbReference>
<dbReference type="GO" id="GO:0004087">
    <property type="term" value="F:carbamoyl-phosphate synthase (ammonia) activity"/>
    <property type="evidence" value="ECO:0007669"/>
    <property type="project" value="RHEA"/>
</dbReference>
<dbReference type="GO" id="GO:0004088">
    <property type="term" value="F:carbamoyl-phosphate synthase (glutamine-hydrolyzing) activity"/>
    <property type="evidence" value="ECO:0007669"/>
    <property type="project" value="UniProtKB-UniRule"/>
</dbReference>
<dbReference type="GO" id="GO:0046872">
    <property type="term" value="F:metal ion binding"/>
    <property type="evidence" value="ECO:0007669"/>
    <property type="project" value="UniProtKB-KW"/>
</dbReference>
<dbReference type="GO" id="GO:0044205">
    <property type="term" value="P:'de novo' UMP biosynthetic process"/>
    <property type="evidence" value="ECO:0007669"/>
    <property type="project" value="UniProtKB-UniRule"/>
</dbReference>
<dbReference type="GO" id="GO:0006541">
    <property type="term" value="P:glutamine metabolic process"/>
    <property type="evidence" value="ECO:0007669"/>
    <property type="project" value="TreeGrafter"/>
</dbReference>
<dbReference type="GO" id="GO:0006526">
    <property type="term" value="P:L-arginine biosynthetic process"/>
    <property type="evidence" value="ECO:0007669"/>
    <property type="project" value="UniProtKB-UniRule"/>
</dbReference>
<dbReference type="CDD" id="cd01424">
    <property type="entry name" value="MGS_CPS_II"/>
    <property type="match status" value="1"/>
</dbReference>
<dbReference type="FunFam" id="1.10.1030.10:FF:000002">
    <property type="entry name" value="Carbamoyl-phosphate synthase large chain"/>
    <property type="match status" value="1"/>
</dbReference>
<dbReference type="FunFam" id="3.30.1490.20:FF:000001">
    <property type="entry name" value="Carbamoyl-phosphate synthase large chain"/>
    <property type="match status" value="1"/>
</dbReference>
<dbReference type="FunFam" id="3.30.470.20:FF:000001">
    <property type="entry name" value="Carbamoyl-phosphate synthase large chain"/>
    <property type="match status" value="1"/>
</dbReference>
<dbReference type="FunFam" id="3.30.470.20:FF:000026">
    <property type="entry name" value="Carbamoyl-phosphate synthase large chain"/>
    <property type="match status" value="1"/>
</dbReference>
<dbReference type="FunFam" id="3.40.50.1380:FF:000011">
    <property type="entry name" value="Carbamoyl-phosphate synthase large chain"/>
    <property type="match status" value="1"/>
</dbReference>
<dbReference type="FunFam" id="3.40.50.20:FF:000001">
    <property type="entry name" value="Carbamoyl-phosphate synthase large chain"/>
    <property type="match status" value="2"/>
</dbReference>
<dbReference type="Gene3D" id="3.40.50.20">
    <property type="match status" value="2"/>
</dbReference>
<dbReference type="Gene3D" id="3.30.1490.20">
    <property type="entry name" value="ATP-grasp fold, A domain"/>
    <property type="match status" value="1"/>
</dbReference>
<dbReference type="Gene3D" id="3.30.470.20">
    <property type="entry name" value="ATP-grasp fold, B domain"/>
    <property type="match status" value="2"/>
</dbReference>
<dbReference type="Gene3D" id="1.10.1030.10">
    <property type="entry name" value="Carbamoyl-phosphate synthetase, large subunit oligomerisation domain"/>
    <property type="match status" value="1"/>
</dbReference>
<dbReference type="Gene3D" id="3.40.50.1380">
    <property type="entry name" value="Methylglyoxal synthase-like domain"/>
    <property type="match status" value="1"/>
</dbReference>
<dbReference type="HAMAP" id="MF_01210_A">
    <property type="entry name" value="CPSase_L_chain_A"/>
    <property type="match status" value="1"/>
</dbReference>
<dbReference type="HAMAP" id="MF_01210_B">
    <property type="entry name" value="CPSase_L_chain_B"/>
    <property type="match status" value="1"/>
</dbReference>
<dbReference type="InterPro" id="IPR011761">
    <property type="entry name" value="ATP-grasp"/>
</dbReference>
<dbReference type="InterPro" id="IPR013815">
    <property type="entry name" value="ATP_grasp_subdomain_1"/>
</dbReference>
<dbReference type="InterPro" id="IPR006275">
    <property type="entry name" value="CarbamoylP_synth_lsu"/>
</dbReference>
<dbReference type="InterPro" id="IPR005480">
    <property type="entry name" value="CarbamoylP_synth_lsu_oligo"/>
</dbReference>
<dbReference type="InterPro" id="IPR036897">
    <property type="entry name" value="CarbamoylP_synth_lsu_oligo_sf"/>
</dbReference>
<dbReference type="InterPro" id="IPR005479">
    <property type="entry name" value="CbamoylP_synth_lsu-like_ATP-bd"/>
</dbReference>
<dbReference type="InterPro" id="IPR005483">
    <property type="entry name" value="CbamoylP_synth_lsu_CPSase_dom"/>
</dbReference>
<dbReference type="InterPro" id="IPR011607">
    <property type="entry name" value="MGS-like_dom"/>
</dbReference>
<dbReference type="InterPro" id="IPR036914">
    <property type="entry name" value="MGS-like_dom_sf"/>
</dbReference>
<dbReference type="InterPro" id="IPR033937">
    <property type="entry name" value="MGS_CPS_CarB"/>
</dbReference>
<dbReference type="InterPro" id="IPR016185">
    <property type="entry name" value="PreATP-grasp_dom_sf"/>
</dbReference>
<dbReference type="NCBIfam" id="TIGR01369">
    <property type="entry name" value="CPSaseII_lrg"/>
    <property type="match status" value="1"/>
</dbReference>
<dbReference type="NCBIfam" id="NF003671">
    <property type="entry name" value="PRK05294.1"/>
    <property type="match status" value="1"/>
</dbReference>
<dbReference type="NCBIfam" id="NF009455">
    <property type="entry name" value="PRK12815.1"/>
    <property type="match status" value="1"/>
</dbReference>
<dbReference type="PANTHER" id="PTHR11405:SF53">
    <property type="entry name" value="CARBAMOYL-PHOSPHATE SYNTHASE [AMMONIA], MITOCHONDRIAL"/>
    <property type="match status" value="1"/>
</dbReference>
<dbReference type="PANTHER" id="PTHR11405">
    <property type="entry name" value="CARBAMOYLTRANSFERASE FAMILY MEMBER"/>
    <property type="match status" value="1"/>
</dbReference>
<dbReference type="Pfam" id="PF02786">
    <property type="entry name" value="CPSase_L_D2"/>
    <property type="match status" value="2"/>
</dbReference>
<dbReference type="Pfam" id="PF02787">
    <property type="entry name" value="CPSase_L_D3"/>
    <property type="match status" value="1"/>
</dbReference>
<dbReference type="Pfam" id="PF02142">
    <property type="entry name" value="MGS"/>
    <property type="match status" value="1"/>
</dbReference>
<dbReference type="PRINTS" id="PR00098">
    <property type="entry name" value="CPSASE"/>
</dbReference>
<dbReference type="SMART" id="SM01096">
    <property type="entry name" value="CPSase_L_D3"/>
    <property type="match status" value="1"/>
</dbReference>
<dbReference type="SMART" id="SM01209">
    <property type="entry name" value="GARS_A"/>
    <property type="match status" value="1"/>
</dbReference>
<dbReference type="SMART" id="SM00851">
    <property type="entry name" value="MGS"/>
    <property type="match status" value="1"/>
</dbReference>
<dbReference type="SUPFAM" id="SSF48108">
    <property type="entry name" value="Carbamoyl phosphate synthetase, large subunit connection domain"/>
    <property type="match status" value="1"/>
</dbReference>
<dbReference type="SUPFAM" id="SSF56059">
    <property type="entry name" value="Glutathione synthetase ATP-binding domain-like"/>
    <property type="match status" value="2"/>
</dbReference>
<dbReference type="SUPFAM" id="SSF52335">
    <property type="entry name" value="Methylglyoxal synthase-like"/>
    <property type="match status" value="1"/>
</dbReference>
<dbReference type="SUPFAM" id="SSF52440">
    <property type="entry name" value="PreATP-grasp domain"/>
    <property type="match status" value="2"/>
</dbReference>
<dbReference type="PROSITE" id="PS50975">
    <property type="entry name" value="ATP_GRASP"/>
    <property type="match status" value="2"/>
</dbReference>
<dbReference type="PROSITE" id="PS00866">
    <property type="entry name" value="CPSASE_1"/>
    <property type="match status" value="2"/>
</dbReference>
<dbReference type="PROSITE" id="PS00867">
    <property type="entry name" value="CPSASE_2"/>
    <property type="match status" value="2"/>
</dbReference>
<dbReference type="PROSITE" id="PS51855">
    <property type="entry name" value="MGS"/>
    <property type="match status" value="1"/>
</dbReference>
<protein>
    <recommendedName>
        <fullName evidence="1">Carbamoyl phosphate synthase large chain</fullName>
        <ecNumber evidence="1">6.3.4.16</ecNumber>
        <ecNumber evidence="1">6.3.5.5</ecNumber>
    </recommendedName>
    <alternativeName>
        <fullName evidence="1">Carbamoyl phosphate synthetase ammonia chain</fullName>
    </alternativeName>
</protein>
<gene>
    <name evidence="1" type="primary">carB</name>
    <name type="ordered locus">BCQ_3672</name>
</gene>